<sequence length="151" mass="17257">MAKINFYAEGVSLPRIRRRIVGKWIAEVCSRYGKAVGEISYLFCDDEYILKANQEFLDHDYYTDIITFDSCEADTVNGDLLISLDTVRSNARALDLRYEDELHRVIIHGILHLCGLKDKSKKDEAQMRAAEEEALVMLQETIGSELSLLHT</sequence>
<protein>
    <recommendedName>
        <fullName evidence="1">Endoribonuclease YbeY</fullName>
        <ecNumber evidence="1">3.1.-.-</ecNumber>
    </recommendedName>
</protein>
<comment type="function">
    <text evidence="1">Single strand-specific metallo-endoribonuclease involved in late-stage 70S ribosome quality control and in maturation of the 3' terminus of the 16S rRNA.</text>
</comment>
<comment type="cofactor">
    <cofactor evidence="1">
        <name>Zn(2+)</name>
        <dbReference type="ChEBI" id="CHEBI:29105"/>
    </cofactor>
    <text evidence="1">Binds 1 zinc ion.</text>
</comment>
<comment type="subcellular location">
    <subcellularLocation>
        <location evidence="1">Cytoplasm</location>
    </subcellularLocation>
</comment>
<comment type="similarity">
    <text evidence="1">Belongs to the endoribonuclease YbeY family.</text>
</comment>
<proteinExistence type="inferred from homology"/>
<accession>B2RKT6</accession>
<feature type="chain" id="PRO_1000089194" description="Endoribonuclease YbeY">
    <location>
        <begin position="1"/>
        <end position="151"/>
    </location>
</feature>
<feature type="binding site" evidence="1">
    <location>
        <position position="108"/>
    </location>
    <ligand>
        <name>Zn(2+)</name>
        <dbReference type="ChEBI" id="CHEBI:29105"/>
        <note>catalytic</note>
    </ligand>
</feature>
<feature type="binding site" evidence="1">
    <location>
        <position position="112"/>
    </location>
    <ligand>
        <name>Zn(2+)</name>
        <dbReference type="ChEBI" id="CHEBI:29105"/>
        <note>catalytic</note>
    </ligand>
</feature>
<feature type="binding site" evidence="1">
    <location>
        <position position="118"/>
    </location>
    <ligand>
        <name>Zn(2+)</name>
        <dbReference type="ChEBI" id="CHEBI:29105"/>
        <note>catalytic</note>
    </ligand>
</feature>
<name>YBEY_PORG3</name>
<dbReference type="EC" id="3.1.-.-" evidence="1"/>
<dbReference type="EMBL" id="AP009380">
    <property type="protein sequence ID" value="BAG33981.1"/>
    <property type="molecule type" value="Genomic_DNA"/>
</dbReference>
<dbReference type="RefSeq" id="WP_012458288.1">
    <property type="nucleotide sequence ID" value="NC_010729.1"/>
</dbReference>
<dbReference type="SMR" id="B2RKT6"/>
<dbReference type="GeneID" id="29256646"/>
<dbReference type="KEGG" id="pgn:PGN_1462"/>
<dbReference type="eggNOG" id="COG0319">
    <property type="taxonomic scope" value="Bacteria"/>
</dbReference>
<dbReference type="HOGENOM" id="CLU_106710_3_3_10"/>
<dbReference type="OrthoDB" id="9811984at2"/>
<dbReference type="BioCyc" id="PGIN431947:G1G2V-1664-MONOMER"/>
<dbReference type="Proteomes" id="UP000008842">
    <property type="component" value="Chromosome"/>
</dbReference>
<dbReference type="GO" id="GO:0005737">
    <property type="term" value="C:cytoplasm"/>
    <property type="evidence" value="ECO:0007669"/>
    <property type="project" value="UniProtKB-SubCell"/>
</dbReference>
<dbReference type="GO" id="GO:0004222">
    <property type="term" value="F:metalloendopeptidase activity"/>
    <property type="evidence" value="ECO:0007669"/>
    <property type="project" value="InterPro"/>
</dbReference>
<dbReference type="GO" id="GO:0004521">
    <property type="term" value="F:RNA endonuclease activity"/>
    <property type="evidence" value="ECO:0007669"/>
    <property type="project" value="UniProtKB-UniRule"/>
</dbReference>
<dbReference type="GO" id="GO:0008270">
    <property type="term" value="F:zinc ion binding"/>
    <property type="evidence" value="ECO:0007669"/>
    <property type="project" value="UniProtKB-UniRule"/>
</dbReference>
<dbReference type="GO" id="GO:0006364">
    <property type="term" value="P:rRNA processing"/>
    <property type="evidence" value="ECO:0007669"/>
    <property type="project" value="UniProtKB-UniRule"/>
</dbReference>
<dbReference type="Gene3D" id="3.40.390.30">
    <property type="entry name" value="Metalloproteases ('zincins'), catalytic domain"/>
    <property type="match status" value="1"/>
</dbReference>
<dbReference type="HAMAP" id="MF_00009">
    <property type="entry name" value="Endoribonucl_YbeY"/>
    <property type="match status" value="1"/>
</dbReference>
<dbReference type="InterPro" id="IPR023091">
    <property type="entry name" value="MetalPrtase_cat_dom_sf_prd"/>
</dbReference>
<dbReference type="InterPro" id="IPR002036">
    <property type="entry name" value="YbeY"/>
</dbReference>
<dbReference type="NCBIfam" id="TIGR00043">
    <property type="entry name" value="rRNA maturation RNase YbeY"/>
    <property type="match status" value="1"/>
</dbReference>
<dbReference type="PANTHER" id="PTHR46986">
    <property type="entry name" value="ENDORIBONUCLEASE YBEY, CHLOROPLASTIC"/>
    <property type="match status" value="1"/>
</dbReference>
<dbReference type="PANTHER" id="PTHR46986:SF1">
    <property type="entry name" value="ENDORIBONUCLEASE YBEY, CHLOROPLASTIC"/>
    <property type="match status" value="1"/>
</dbReference>
<dbReference type="Pfam" id="PF02130">
    <property type="entry name" value="YbeY"/>
    <property type="match status" value="1"/>
</dbReference>
<dbReference type="SUPFAM" id="SSF55486">
    <property type="entry name" value="Metalloproteases ('zincins'), catalytic domain"/>
    <property type="match status" value="1"/>
</dbReference>
<gene>
    <name evidence="1" type="primary">ybeY</name>
    <name type="ordered locus">PGN_1462</name>
</gene>
<evidence type="ECO:0000255" key="1">
    <source>
        <dbReference type="HAMAP-Rule" id="MF_00009"/>
    </source>
</evidence>
<reference key="1">
    <citation type="journal article" date="2008" name="DNA Res.">
        <title>Determination of the genome sequence of Porphyromonas gingivalis strain ATCC 33277 and genomic comparison with strain W83 revealed extensive genome rearrangements in P. gingivalis.</title>
        <authorList>
            <person name="Naito M."/>
            <person name="Hirakawa H."/>
            <person name="Yamashita A."/>
            <person name="Ohara N."/>
            <person name="Shoji M."/>
            <person name="Yukitake H."/>
            <person name="Nakayama K."/>
            <person name="Toh H."/>
            <person name="Yoshimura F."/>
            <person name="Kuhara S."/>
            <person name="Hattori M."/>
            <person name="Hayashi T."/>
            <person name="Nakayama K."/>
        </authorList>
    </citation>
    <scope>NUCLEOTIDE SEQUENCE [LARGE SCALE GENOMIC DNA]</scope>
    <source>
        <strain>ATCC 33277 / DSM 20709 / CIP 103683 / JCM 12257 / NCTC 11834 / 2561</strain>
    </source>
</reference>
<keyword id="KW-0963">Cytoplasm</keyword>
<keyword id="KW-0255">Endonuclease</keyword>
<keyword id="KW-0378">Hydrolase</keyword>
<keyword id="KW-0479">Metal-binding</keyword>
<keyword id="KW-0540">Nuclease</keyword>
<keyword id="KW-0690">Ribosome biogenesis</keyword>
<keyword id="KW-0698">rRNA processing</keyword>
<keyword id="KW-0862">Zinc</keyword>
<organism>
    <name type="scientific">Porphyromonas gingivalis (strain ATCC 33277 / DSM 20709 / CIP 103683 / JCM 12257 / NCTC 11834 / 2561)</name>
    <dbReference type="NCBI Taxonomy" id="431947"/>
    <lineage>
        <taxon>Bacteria</taxon>
        <taxon>Pseudomonadati</taxon>
        <taxon>Bacteroidota</taxon>
        <taxon>Bacteroidia</taxon>
        <taxon>Bacteroidales</taxon>
        <taxon>Porphyromonadaceae</taxon>
        <taxon>Porphyromonas</taxon>
    </lineage>
</organism>